<comment type="function">
    <text evidence="2 3">Component of a progesterone-binding protein complex. Binds progesterone (By similarity). Has many reported cellular functions (heme homeostasis, interaction with CYPs). Required for the maintenance of uterine histoarchitecture and normal female reproductive lifespan (By similarity). Intracellular heme chaperone. Regulates heme synthesis via interactions with FECH and acts as a heme donor for at least some hemoproteins (By similarity). Forms a ternary complex with TMEM97 receptor and low density lipid receptor/LDLR, which increases LDLR-mediated LDL lipoprotein internalization (By similarity).</text>
</comment>
<comment type="subunit">
    <text evidence="2">Homodimer. Forms stable homodimer through hydrophobic heme-heme stacking interactions. Interacts with FECH; the interaction results in decreased FECH activity. Interacts with EGFR, CYP1A1 and CYP3A4; the interactions require PGRMC1 homodimerization. Interacts with TMEM97 and LDLR; the interaction increases LDL internalization.</text>
</comment>
<comment type="subcellular location">
    <subcellularLocation>
        <location evidence="4">Microsome membrane</location>
        <topology evidence="5">Single-pass membrane protein</topology>
    </subcellularLocation>
    <subcellularLocation>
        <location evidence="2">Smooth endoplasmic reticulum membrane</location>
        <topology evidence="5">Single-pass membrane protein</topology>
    </subcellularLocation>
    <subcellularLocation>
        <location evidence="3">Mitochondrion outer membrane</location>
        <topology evidence="2">Single-pass membrane protein</topology>
        <orientation evidence="3">Extracellular side</orientation>
    </subcellularLocation>
    <subcellularLocation>
        <location evidence="2">Secreted</location>
    </subcellularLocation>
</comment>
<comment type="domain">
    <text evidence="1">The cytochrome b5 heme-binding domain lacks the conserved iron-binding His residues at positions 106 and 130.</text>
</comment>
<comment type="miscellaneous">
    <text evidence="2">Non-classical progesterone receptors involved in extranuclear signaling are classified in 2 groups: the class II progestin and adipoQ receptor (PAQR) family (also called mPRs) (PAQR5, PAQR6, PAQR7, PAQR8 and PAQR9) and the b5-like heme/steroid-binding protein family (also called MAPRs) (PGRMC1, PGRMC2, NENF and CYB5D2).</text>
</comment>
<comment type="similarity">
    <text evidence="7">Belongs to the cytochrome b5 family. MAPR subfamily.</text>
</comment>
<accession>Q17QC0</accession>
<accession>Q9N0T7</accession>
<feature type="chain" id="PRO_0000253628" description="Membrane-associated progesterone receptor component 1">
    <location>
        <begin position="1"/>
        <end position="194"/>
    </location>
</feature>
<feature type="topological domain" description="Lumenal" evidence="5">
    <location>
        <begin position="1"/>
        <end position="24"/>
    </location>
</feature>
<feature type="transmembrane region" description="Helical" evidence="5">
    <location>
        <begin position="25"/>
        <end position="43"/>
    </location>
</feature>
<feature type="topological domain" description="Cytoplasmic" evidence="5">
    <location>
        <begin position="44"/>
        <end position="194"/>
    </location>
</feature>
<feature type="domain" description="Cytochrome b5 heme-binding">
    <location>
        <begin position="71"/>
        <end position="170"/>
    </location>
</feature>
<feature type="region of interest" description="Disordered" evidence="6">
    <location>
        <begin position="50"/>
        <end position="70"/>
    </location>
</feature>
<feature type="region of interest" description="Disordered" evidence="6">
    <location>
        <begin position="174"/>
        <end position="194"/>
    </location>
</feature>
<feature type="binding site" description="axial binding residue" evidence="2">
    <location>
        <position position="112"/>
    </location>
    <ligand>
        <name>heme</name>
        <dbReference type="ChEBI" id="CHEBI:30413"/>
    </ligand>
    <ligandPart>
        <name>Fe</name>
        <dbReference type="ChEBI" id="CHEBI:18248"/>
    </ligandPart>
</feature>
<feature type="modified residue" description="Phosphoserine" evidence="2">
    <location>
        <position position="54"/>
    </location>
</feature>
<feature type="modified residue" description="Phosphoserine" evidence="2">
    <location>
        <position position="56"/>
    </location>
</feature>
<feature type="modified residue" description="Phosphothreonine" evidence="2">
    <location>
        <position position="73"/>
    </location>
</feature>
<feature type="modified residue" description="Phosphoserine" evidence="2">
    <location>
        <position position="180"/>
    </location>
</feature>
<feature type="sequence conflict" description="In Ref. 2; AAF67749." evidence="7" ref="2">
    <original>D</original>
    <variation>E</variation>
    <location>
        <position position="172"/>
    </location>
</feature>
<feature type="sequence conflict" description="In Ref. 2; AAF67749." evidence="7" ref="2">
    <original>K</original>
    <variation>E</variation>
    <location>
        <position position="182"/>
    </location>
</feature>
<organism>
    <name type="scientific">Bos taurus</name>
    <name type="common">Bovine</name>
    <dbReference type="NCBI Taxonomy" id="9913"/>
    <lineage>
        <taxon>Eukaryota</taxon>
        <taxon>Metazoa</taxon>
        <taxon>Chordata</taxon>
        <taxon>Craniata</taxon>
        <taxon>Vertebrata</taxon>
        <taxon>Euteleostomi</taxon>
        <taxon>Mammalia</taxon>
        <taxon>Eutheria</taxon>
        <taxon>Laurasiatheria</taxon>
        <taxon>Artiodactyla</taxon>
        <taxon>Ruminantia</taxon>
        <taxon>Pecora</taxon>
        <taxon>Bovidae</taxon>
        <taxon>Bovinae</taxon>
        <taxon>Bos</taxon>
    </lineage>
</organism>
<reference key="1">
    <citation type="submission" date="2006-06" db="EMBL/GenBank/DDBJ databases">
        <authorList>
            <consortium name="NIH - Mammalian Gene Collection (MGC) project"/>
        </authorList>
    </citation>
    <scope>NUCLEOTIDE SEQUENCE [LARGE SCALE MRNA]</scope>
    <source>
        <strain>Hereford</strain>
        <tissue>Fetal pons</tissue>
    </source>
</reference>
<reference key="2">
    <citation type="submission" date="2000-04" db="EMBL/GenBank/DDBJ databases">
        <title>Steroid binding protein of bovine lens epithelial cell membranes.</title>
        <authorList>
            <person name="Zhu X.L."/>
            <person name="Cenedella R.J."/>
        </authorList>
    </citation>
    <scope>NUCLEOTIDE SEQUENCE [MRNA] OF 10-194</scope>
    <source>
        <tissue>Lens epithelium</tissue>
    </source>
</reference>
<gene>
    <name type="primary">PGRMC1</name>
</gene>
<name>PGRC1_BOVIN</name>
<protein>
    <recommendedName>
        <fullName>Membrane-associated progesterone receptor component 1</fullName>
        <shortName evidence="2">mPR</shortName>
    </recommendedName>
</protein>
<keyword id="KW-0256">Endoplasmic reticulum</keyword>
<keyword id="KW-0408">Iron</keyword>
<keyword id="KW-0446">Lipid-binding</keyword>
<keyword id="KW-0472">Membrane</keyword>
<keyword id="KW-0479">Metal-binding</keyword>
<keyword id="KW-0492">Microsome</keyword>
<keyword id="KW-0496">Mitochondrion</keyword>
<keyword id="KW-1000">Mitochondrion outer membrane</keyword>
<keyword id="KW-0597">Phosphoprotein</keyword>
<keyword id="KW-0675">Receptor</keyword>
<keyword id="KW-1185">Reference proteome</keyword>
<keyword id="KW-0964">Secreted</keyword>
<keyword id="KW-0754">Steroid-binding</keyword>
<keyword id="KW-0812">Transmembrane</keyword>
<keyword id="KW-1133">Transmembrane helix</keyword>
<proteinExistence type="evidence at transcript level"/>
<dbReference type="EMBL" id="BC118444">
    <property type="protein sequence ID" value="AAI18445.1"/>
    <property type="molecule type" value="mRNA"/>
</dbReference>
<dbReference type="EMBL" id="AF254804">
    <property type="protein sequence ID" value="AAF67749.1"/>
    <property type="molecule type" value="mRNA"/>
</dbReference>
<dbReference type="RefSeq" id="NP_001068601.1">
    <property type="nucleotide sequence ID" value="NM_001075133.1"/>
</dbReference>
<dbReference type="SMR" id="Q17QC0"/>
<dbReference type="FunCoup" id="Q17QC0">
    <property type="interactions" value="2626"/>
</dbReference>
<dbReference type="STRING" id="9913.ENSBTAP00000026053"/>
<dbReference type="PaxDb" id="9913-ENSBTAP00000026053"/>
<dbReference type="PeptideAtlas" id="Q17QC0"/>
<dbReference type="GeneID" id="317706"/>
<dbReference type="KEGG" id="bta:317706"/>
<dbReference type="CTD" id="10857"/>
<dbReference type="eggNOG" id="KOG1110">
    <property type="taxonomic scope" value="Eukaryota"/>
</dbReference>
<dbReference type="InParanoid" id="Q17QC0"/>
<dbReference type="OrthoDB" id="547796at2759"/>
<dbReference type="Proteomes" id="UP000009136">
    <property type="component" value="Unplaced"/>
</dbReference>
<dbReference type="GO" id="GO:0000775">
    <property type="term" value="C:chromosome, centromeric region"/>
    <property type="evidence" value="ECO:0000314"/>
    <property type="project" value="AgBase"/>
</dbReference>
<dbReference type="GO" id="GO:0012505">
    <property type="term" value="C:endomembrane system"/>
    <property type="evidence" value="ECO:0000318"/>
    <property type="project" value="GO_Central"/>
</dbReference>
<dbReference type="GO" id="GO:0005783">
    <property type="term" value="C:endoplasmic reticulum"/>
    <property type="evidence" value="ECO:0000318"/>
    <property type="project" value="GO_Central"/>
</dbReference>
<dbReference type="GO" id="GO:0070062">
    <property type="term" value="C:extracellular exosome"/>
    <property type="evidence" value="ECO:0000250"/>
    <property type="project" value="AgBase"/>
</dbReference>
<dbReference type="GO" id="GO:0042585">
    <property type="term" value="C:germinal vesicle"/>
    <property type="evidence" value="ECO:0000314"/>
    <property type="project" value="AgBase"/>
</dbReference>
<dbReference type="GO" id="GO:1990385">
    <property type="term" value="C:meiotic spindle midzone"/>
    <property type="evidence" value="ECO:0000314"/>
    <property type="project" value="AgBase"/>
</dbReference>
<dbReference type="GO" id="GO:0016020">
    <property type="term" value="C:membrane"/>
    <property type="evidence" value="ECO:0000250"/>
    <property type="project" value="AgBase"/>
</dbReference>
<dbReference type="GO" id="GO:0030496">
    <property type="term" value="C:midbody"/>
    <property type="evidence" value="ECO:0000314"/>
    <property type="project" value="AgBase"/>
</dbReference>
<dbReference type="GO" id="GO:0005741">
    <property type="term" value="C:mitochondrial outer membrane"/>
    <property type="evidence" value="ECO:0000250"/>
    <property type="project" value="UniProtKB"/>
</dbReference>
<dbReference type="GO" id="GO:0030868">
    <property type="term" value="C:smooth endoplasmic reticulum membrane"/>
    <property type="evidence" value="ECO:0007669"/>
    <property type="project" value="UniProtKB-SubCell"/>
</dbReference>
<dbReference type="GO" id="GO:0020037">
    <property type="term" value="F:heme binding"/>
    <property type="evidence" value="ECO:0000250"/>
    <property type="project" value="UniProtKB"/>
</dbReference>
<dbReference type="GO" id="GO:0046872">
    <property type="term" value="F:metal ion binding"/>
    <property type="evidence" value="ECO:0007669"/>
    <property type="project" value="UniProtKB-KW"/>
</dbReference>
<dbReference type="GO" id="GO:0042803">
    <property type="term" value="F:protein homodimerization activity"/>
    <property type="evidence" value="ECO:0000250"/>
    <property type="project" value="UniProtKB"/>
</dbReference>
<dbReference type="GO" id="GO:0005496">
    <property type="term" value="F:steroid binding"/>
    <property type="evidence" value="ECO:0007669"/>
    <property type="project" value="UniProtKB-KW"/>
</dbReference>
<dbReference type="GO" id="GO:0006783">
    <property type="term" value="P:heme biosynthetic process"/>
    <property type="evidence" value="ECO:0000250"/>
    <property type="project" value="UniProtKB"/>
</dbReference>
<dbReference type="GO" id="GO:1903537">
    <property type="term" value="P:meiotic cell cycle process involved in oocyte maturation"/>
    <property type="evidence" value="ECO:0000315"/>
    <property type="project" value="AgBase"/>
</dbReference>
<dbReference type="GO" id="GO:0140077">
    <property type="term" value="P:positive regulation of lipoprotein transport"/>
    <property type="evidence" value="ECO:0000250"/>
    <property type="project" value="UniProtKB"/>
</dbReference>
<dbReference type="FunFam" id="3.10.120.10:FF:000003">
    <property type="entry name" value="membrane-associated progesterone receptor component 1"/>
    <property type="match status" value="1"/>
</dbReference>
<dbReference type="Gene3D" id="3.10.120.10">
    <property type="entry name" value="Cytochrome b5-like heme/steroid binding domain"/>
    <property type="match status" value="1"/>
</dbReference>
<dbReference type="InterPro" id="IPR001199">
    <property type="entry name" value="Cyt_B5-like_heme/steroid-bd"/>
</dbReference>
<dbReference type="InterPro" id="IPR036400">
    <property type="entry name" value="Cyt_B5-like_heme/steroid_sf"/>
</dbReference>
<dbReference type="InterPro" id="IPR050577">
    <property type="entry name" value="MAPR/NEUFC/NENF-like"/>
</dbReference>
<dbReference type="PANTHER" id="PTHR10281:SF23">
    <property type="entry name" value="MEMBRANE-ASSOCIATED PROGESTERONE RECEPTOR COMPONENT 1"/>
    <property type="match status" value="1"/>
</dbReference>
<dbReference type="PANTHER" id="PTHR10281">
    <property type="entry name" value="MEMBRANE-ASSOCIATED PROGESTERONE RECEPTOR COMPONENT-RELATED"/>
    <property type="match status" value="1"/>
</dbReference>
<dbReference type="Pfam" id="PF00173">
    <property type="entry name" value="Cyt-b5"/>
    <property type="match status" value="1"/>
</dbReference>
<dbReference type="SMART" id="SM01117">
    <property type="entry name" value="Cyt-b5"/>
    <property type="match status" value="1"/>
</dbReference>
<dbReference type="SUPFAM" id="SSF55856">
    <property type="entry name" value="Cytochrome b5-like heme/steroid binding domain"/>
    <property type="match status" value="1"/>
</dbReference>
<evidence type="ECO:0000250" key="1"/>
<evidence type="ECO:0000250" key="2">
    <source>
        <dbReference type="UniProtKB" id="O00264"/>
    </source>
</evidence>
<evidence type="ECO:0000250" key="3">
    <source>
        <dbReference type="UniProtKB" id="O55022"/>
    </source>
</evidence>
<evidence type="ECO:0000250" key="4">
    <source>
        <dbReference type="UniProtKB" id="Q95250"/>
    </source>
</evidence>
<evidence type="ECO:0000255" key="5"/>
<evidence type="ECO:0000256" key="6">
    <source>
        <dbReference type="SAM" id="MobiDB-lite"/>
    </source>
</evidence>
<evidence type="ECO:0000305" key="7"/>
<sequence>MAAEDVAATGADTSELESGGLLQEIFTSPLNLLLLGLCIFLLYKIVRGDQPAASDSDDDEPPPLPRLKRRDFTPAELRRFDGVQDPRILMAINGKVFDVTKGRKFYGPEGPYGVFAGRDASRGLATFCLDKEALKDEYDDLSDLTPAQQETLSDWDSQFTFKYHHVGKLLKDGEEPTVYSDKEEPKDESTRKND</sequence>